<reference key="1">
    <citation type="journal article" date="2008" name="BMC Genomics">
        <title>Genomics of an extreme psychrophile, Psychromonas ingrahamii.</title>
        <authorList>
            <person name="Riley M."/>
            <person name="Staley J.T."/>
            <person name="Danchin A."/>
            <person name="Wang T.Z."/>
            <person name="Brettin T.S."/>
            <person name="Hauser L.J."/>
            <person name="Land M.L."/>
            <person name="Thompson L.S."/>
        </authorList>
    </citation>
    <scope>NUCLEOTIDE SEQUENCE [LARGE SCALE GENOMIC DNA]</scope>
    <source>
        <strain>DSM 17664 / CCUG 51855 / 37</strain>
    </source>
</reference>
<proteinExistence type="inferred from homology"/>
<comment type="function">
    <text evidence="1">Catalyzes the conversion of acetate into acetyl-CoA (AcCoA), an essential intermediate at the junction of anabolic and catabolic pathways. AcsA undergoes a two-step reaction. In the first half reaction, AcsA combines acetate with ATP to form acetyl-adenylate (AcAMP) intermediate. In the second half reaction, it can then transfer the acetyl group from AcAMP to the sulfhydryl group of CoA, forming the product AcCoA.</text>
</comment>
<comment type="catalytic activity">
    <reaction evidence="1">
        <text>acetate + ATP + CoA = acetyl-CoA + AMP + diphosphate</text>
        <dbReference type="Rhea" id="RHEA:23176"/>
        <dbReference type="ChEBI" id="CHEBI:30089"/>
        <dbReference type="ChEBI" id="CHEBI:30616"/>
        <dbReference type="ChEBI" id="CHEBI:33019"/>
        <dbReference type="ChEBI" id="CHEBI:57287"/>
        <dbReference type="ChEBI" id="CHEBI:57288"/>
        <dbReference type="ChEBI" id="CHEBI:456215"/>
        <dbReference type="EC" id="6.2.1.1"/>
    </reaction>
</comment>
<comment type="cofactor">
    <cofactor evidence="1">
        <name>Mg(2+)</name>
        <dbReference type="ChEBI" id="CHEBI:18420"/>
    </cofactor>
</comment>
<comment type="PTM">
    <text evidence="1">Acetylated. Deacetylation by the SIR2-homolog deacetylase activates the enzyme.</text>
</comment>
<comment type="similarity">
    <text evidence="1">Belongs to the ATP-dependent AMP-binding enzyme family.</text>
</comment>
<evidence type="ECO:0000255" key="1">
    <source>
        <dbReference type="HAMAP-Rule" id="MF_01123"/>
    </source>
</evidence>
<feature type="chain" id="PRO_1000065306" description="Acetyl-coenzyme A synthetase">
    <location>
        <begin position="1"/>
        <end position="649"/>
    </location>
</feature>
<feature type="binding site" evidence="1">
    <location>
        <begin position="191"/>
        <end position="194"/>
    </location>
    <ligand>
        <name>CoA</name>
        <dbReference type="ChEBI" id="CHEBI:57287"/>
    </ligand>
</feature>
<feature type="binding site" evidence="1">
    <location>
        <position position="311"/>
    </location>
    <ligand>
        <name>CoA</name>
        <dbReference type="ChEBI" id="CHEBI:57287"/>
    </ligand>
</feature>
<feature type="binding site" evidence="1">
    <location>
        <position position="335"/>
    </location>
    <ligand>
        <name>CoA</name>
        <dbReference type="ChEBI" id="CHEBI:57287"/>
    </ligand>
</feature>
<feature type="binding site" evidence="1">
    <location>
        <begin position="387"/>
        <end position="389"/>
    </location>
    <ligand>
        <name>ATP</name>
        <dbReference type="ChEBI" id="CHEBI:30616"/>
    </ligand>
</feature>
<feature type="binding site" evidence="1">
    <location>
        <begin position="411"/>
        <end position="416"/>
    </location>
    <ligand>
        <name>ATP</name>
        <dbReference type="ChEBI" id="CHEBI:30616"/>
    </ligand>
</feature>
<feature type="binding site" evidence="1">
    <location>
        <position position="500"/>
    </location>
    <ligand>
        <name>ATP</name>
        <dbReference type="ChEBI" id="CHEBI:30616"/>
    </ligand>
</feature>
<feature type="binding site" evidence="1">
    <location>
        <position position="515"/>
    </location>
    <ligand>
        <name>ATP</name>
        <dbReference type="ChEBI" id="CHEBI:30616"/>
    </ligand>
</feature>
<feature type="binding site" evidence="1">
    <location>
        <position position="523"/>
    </location>
    <ligand>
        <name>CoA</name>
        <dbReference type="ChEBI" id="CHEBI:57287"/>
    </ligand>
</feature>
<feature type="binding site" evidence="1">
    <location>
        <position position="526"/>
    </location>
    <ligand>
        <name>ATP</name>
        <dbReference type="ChEBI" id="CHEBI:30616"/>
    </ligand>
</feature>
<feature type="binding site" evidence="1">
    <location>
        <position position="537"/>
    </location>
    <ligand>
        <name>Mg(2+)</name>
        <dbReference type="ChEBI" id="CHEBI:18420"/>
    </ligand>
</feature>
<feature type="binding site" evidence="1">
    <location>
        <position position="539"/>
    </location>
    <ligand>
        <name>Mg(2+)</name>
        <dbReference type="ChEBI" id="CHEBI:18420"/>
    </ligand>
</feature>
<feature type="binding site" evidence="1">
    <location>
        <position position="542"/>
    </location>
    <ligand>
        <name>Mg(2+)</name>
        <dbReference type="ChEBI" id="CHEBI:18420"/>
    </ligand>
</feature>
<feature type="binding site" evidence="1">
    <location>
        <position position="584"/>
    </location>
    <ligand>
        <name>CoA</name>
        <dbReference type="ChEBI" id="CHEBI:57287"/>
    </ligand>
</feature>
<feature type="modified residue" description="N6-acetyllysine" evidence="1">
    <location>
        <position position="609"/>
    </location>
</feature>
<gene>
    <name evidence="1" type="primary">acsA</name>
    <name type="ordered locus">Ping_3120</name>
</gene>
<sequence>MSEEHIYPVTDNLAKNSLLTNEEYLTQYQASISDPSAFWGEKGKILDWIKPYTKVKNSSFDSGHVSIKWFEDGKLNVSANCIDRHLATKGDQVAILWEGDTADKDEKITYKQLHQRVCQFANVLKSQGVRKGDVVCLYMPMTPEAAVAMLACTRIGAVHSIVFGGFSPDAIAGRIVDSSAKIVITADEGRRGGRVVPLKANVDEALTKDGTDCVKSVIVFKNTGGEVNWVVGRDLDWESVCADESSECEPEAMNAEDPLFILYTSGSTGTPKGVLHTTGGYLVYAAMTFKYVFDYQEGDIYWCTADVGWITGHTYSVYGPLANGATSLIFEGVPNYPTPARMSEVVDKHKVSILYTAPTAIRALMAKGDQAIEGTHRSSLRILGSVGEPINPEAWEWYYNKIGDERCPIVDTWWQTETGGILISPLPGATDLKPGSATRPFFGVQPAIVDSEGVVLEGEAAGNLVMLDSWPGQMRTLYNNHDRFEQTYFSTFKGMYFTGDGARRDSDGYYWITGRVDDVLNVSGHRMGTAEIESALVSHPKIAEAAVVGVPHEIKGQGIYAYVTLNEGEYPSPELYAEVKQWVRKEIGAIATPDILHWAEGLPKTRSGKIMRRILRKIATGESDSLGDISTLADPSVVEQLIKENRETS</sequence>
<accession>A1SZA2</accession>
<keyword id="KW-0007">Acetylation</keyword>
<keyword id="KW-0067">ATP-binding</keyword>
<keyword id="KW-0436">Ligase</keyword>
<keyword id="KW-0460">Magnesium</keyword>
<keyword id="KW-0479">Metal-binding</keyword>
<keyword id="KW-0547">Nucleotide-binding</keyword>
<keyword id="KW-1185">Reference proteome</keyword>
<protein>
    <recommendedName>
        <fullName evidence="1">Acetyl-coenzyme A synthetase</fullName>
        <shortName evidence="1">AcCoA synthetase</shortName>
        <shortName evidence="1">Acs</shortName>
        <ecNumber evidence="1">6.2.1.1</ecNumber>
    </recommendedName>
    <alternativeName>
        <fullName evidence="1">Acetate--CoA ligase</fullName>
    </alternativeName>
    <alternativeName>
        <fullName evidence="1">Acyl-activating enzyme</fullName>
    </alternativeName>
</protein>
<dbReference type="EC" id="6.2.1.1" evidence="1"/>
<dbReference type="EMBL" id="CP000510">
    <property type="protein sequence ID" value="ABM04817.1"/>
    <property type="molecule type" value="Genomic_DNA"/>
</dbReference>
<dbReference type="RefSeq" id="WP_011771371.1">
    <property type="nucleotide sequence ID" value="NC_008709.1"/>
</dbReference>
<dbReference type="SMR" id="A1SZA2"/>
<dbReference type="STRING" id="357804.Ping_3120"/>
<dbReference type="KEGG" id="pin:Ping_3120"/>
<dbReference type="eggNOG" id="COG0365">
    <property type="taxonomic scope" value="Bacteria"/>
</dbReference>
<dbReference type="HOGENOM" id="CLU_000022_3_6_6"/>
<dbReference type="OrthoDB" id="9803968at2"/>
<dbReference type="Proteomes" id="UP000000639">
    <property type="component" value="Chromosome"/>
</dbReference>
<dbReference type="GO" id="GO:0005829">
    <property type="term" value="C:cytosol"/>
    <property type="evidence" value="ECO:0007669"/>
    <property type="project" value="TreeGrafter"/>
</dbReference>
<dbReference type="GO" id="GO:0003987">
    <property type="term" value="F:acetate-CoA ligase activity"/>
    <property type="evidence" value="ECO:0007669"/>
    <property type="project" value="UniProtKB-UniRule"/>
</dbReference>
<dbReference type="GO" id="GO:0016208">
    <property type="term" value="F:AMP binding"/>
    <property type="evidence" value="ECO:0007669"/>
    <property type="project" value="InterPro"/>
</dbReference>
<dbReference type="GO" id="GO:0005524">
    <property type="term" value="F:ATP binding"/>
    <property type="evidence" value="ECO:0007669"/>
    <property type="project" value="UniProtKB-KW"/>
</dbReference>
<dbReference type="GO" id="GO:0046872">
    <property type="term" value="F:metal ion binding"/>
    <property type="evidence" value="ECO:0007669"/>
    <property type="project" value="UniProtKB-KW"/>
</dbReference>
<dbReference type="GO" id="GO:0019427">
    <property type="term" value="P:acetyl-CoA biosynthetic process from acetate"/>
    <property type="evidence" value="ECO:0007669"/>
    <property type="project" value="InterPro"/>
</dbReference>
<dbReference type="CDD" id="cd05966">
    <property type="entry name" value="ACS"/>
    <property type="match status" value="1"/>
</dbReference>
<dbReference type="FunFam" id="3.30.300.30:FF:000004">
    <property type="entry name" value="Acetyl-coenzyme A synthetase"/>
    <property type="match status" value="1"/>
</dbReference>
<dbReference type="FunFam" id="3.40.50.12780:FF:000001">
    <property type="entry name" value="Acetyl-coenzyme A synthetase"/>
    <property type="match status" value="1"/>
</dbReference>
<dbReference type="Gene3D" id="3.30.300.30">
    <property type="match status" value="1"/>
</dbReference>
<dbReference type="Gene3D" id="3.40.50.12780">
    <property type="entry name" value="N-terminal domain of ligase-like"/>
    <property type="match status" value="1"/>
</dbReference>
<dbReference type="HAMAP" id="MF_01123">
    <property type="entry name" value="Ac_CoA_synth"/>
    <property type="match status" value="1"/>
</dbReference>
<dbReference type="InterPro" id="IPR011904">
    <property type="entry name" value="Ac_CoA_lig"/>
</dbReference>
<dbReference type="InterPro" id="IPR032387">
    <property type="entry name" value="ACAS_N"/>
</dbReference>
<dbReference type="InterPro" id="IPR025110">
    <property type="entry name" value="AMP-bd_C"/>
</dbReference>
<dbReference type="InterPro" id="IPR045851">
    <property type="entry name" value="AMP-bd_C_sf"/>
</dbReference>
<dbReference type="InterPro" id="IPR020845">
    <property type="entry name" value="AMP-binding_CS"/>
</dbReference>
<dbReference type="InterPro" id="IPR000873">
    <property type="entry name" value="AMP-dep_synth/lig_dom"/>
</dbReference>
<dbReference type="InterPro" id="IPR042099">
    <property type="entry name" value="ANL_N_sf"/>
</dbReference>
<dbReference type="NCBIfam" id="TIGR02188">
    <property type="entry name" value="Ac_CoA_lig_AcsA"/>
    <property type="match status" value="1"/>
</dbReference>
<dbReference type="NCBIfam" id="NF001208">
    <property type="entry name" value="PRK00174.1"/>
    <property type="match status" value="1"/>
</dbReference>
<dbReference type="PANTHER" id="PTHR24095">
    <property type="entry name" value="ACETYL-COENZYME A SYNTHETASE"/>
    <property type="match status" value="1"/>
</dbReference>
<dbReference type="PANTHER" id="PTHR24095:SF243">
    <property type="entry name" value="ACETYL-COENZYME A SYNTHETASE"/>
    <property type="match status" value="1"/>
</dbReference>
<dbReference type="Pfam" id="PF16177">
    <property type="entry name" value="ACAS_N"/>
    <property type="match status" value="1"/>
</dbReference>
<dbReference type="Pfam" id="PF00501">
    <property type="entry name" value="AMP-binding"/>
    <property type="match status" value="1"/>
</dbReference>
<dbReference type="Pfam" id="PF13193">
    <property type="entry name" value="AMP-binding_C"/>
    <property type="match status" value="1"/>
</dbReference>
<dbReference type="SUPFAM" id="SSF56801">
    <property type="entry name" value="Acetyl-CoA synthetase-like"/>
    <property type="match status" value="1"/>
</dbReference>
<dbReference type="PROSITE" id="PS00455">
    <property type="entry name" value="AMP_BINDING"/>
    <property type="match status" value="1"/>
</dbReference>
<name>ACSA_PSYIN</name>
<organism>
    <name type="scientific">Psychromonas ingrahamii (strain DSM 17664 / CCUG 51855 / 37)</name>
    <dbReference type="NCBI Taxonomy" id="357804"/>
    <lineage>
        <taxon>Bacteria</taxon>
        <taxon>Pseudomonadati</taxon>
        <taxon>Pseudomonadota</taxon>
        <taxon>Gammaproteobacteria</taxon>
        <taxon>Alteromonadales</taxon>
        <taxon>Psychromonadaceae</taxon>
        <taxon>Psychromonas</taxon>
    </lineage>
</organism>